<reference key="1">
    <citation type="submission" date="2007-04" db="EMBL/GenBank/DDBJ databases">
        <title>Complete sequence of chromosome of Mycobacterium gilvum PYR-GCK.</title>
        <authorList>
            <consortium name="US DOE Joint Genome Institute"/>
            <person name="Copeland A."/>
            <person name="Lucas S."/>
            <person name="Lapidus A."/>
            <person name="Barry K."/>
            <person name="Detter J.C."/>
            <person name="Glavina del Rio T."/>
            <person name="Hammon N."/>
            <person name="Israni S."/>
            <person name="Dalin E."/>
            <person name="Tice H."/>
            <person name="Pitluck S."/>
            <person name="Chain P."/>
            <person name="Malfatti S."/>
            <person name="Shin M."/>
            <person name="Vergez L."/>
            <person name="Schmutz J."/>
            <person name="Larimer F."/>
            <person name="Land M."/>
            <person name="Hauser L."/>
            <person name="Kyrpides N."/>
            <person name="Mikhailova N."/>
            <person name="Miller C."/>
            <person name="Richardson P."/>
        </authorList>
    </citation>
    <scope>NUCLEOTIDE SEQUENCE [LARGE SCALE GENOMIC DNA]</scope>
    <source>
        <strain>PYR-GCK</strain>
    </source>
</reference>
<name>HRCA_MYCGI</name>
<protein>
    <recommendedName>
        <fullName evidence="1">Heat-inducible transcription repressor HrcA</fullName>
    </recommendedName>
</protein>
<organism>
    <name type="scientific">Mycolicibacterium gilvum (strain PYR-GCK)</name>
    <name type="common">Mycobacterium gilvum (strain PYR-GCK)</name>
    <dbReference type="NCBI Taxonomy" id="350054"/>
    <lineage>
        <taxon>Bacteria</taxon>
        <taxon>Bacillati</taxon>
        <taxon>Actinomycetota</taxon>
        <taxon>Actinomycetes</taxon>
        <taxon>Mycobacteriales</taxon>
        <taxon>Mycobacteriaceae</taxon>
        <taxon>Mycolicibacterium</taxon>
    </lineage>
</organism>
<comment type="function">
    <text evidence="1">Negative regulator of class I heat shock genes (grpE-dnaK-dnaJ and groELS operons). Prevents heat-shock induction of these operons.</text>
</comment>
<comment type="similarity">
    <text evidence="1">Belongs to the HrcA family.</text>
</comment>
<gene>
    <name evidence="1" type="primary">hrcA</name>
    <name type="ordered locus">Mflv_2701</name>
</gene>
<dbReference type="EMBL" id="CP000656">
    <property type="protein sequence ID" value="ABP45178.1"/>
    <property type="molecule type" value="Genomic_DNA"/>
</dbReference>
<dbReference type="SMR" id="A4T2C4"/>
<dbReference type="STRING" id="350054.Mflv_2701"/>
<dbReference type="KEGG" id="mgi:Mflv_2701"/>
<dbReference type="eggNOG" id="COG1420">
    <property type="taxonomic scope" value="Bacteria"/>
</dbReference>
<dbReference type="HOGENOM" id="CLU_050019_2_0_11"/>
<dbReference type="OrthoDB" id="9783139at2"/>
<dbReference type="GO" id="GO:0003677">
    <property type="term" value="F:DNA binding"/>
    <property type="evidence" value="ECO:0007669"/>
    <property type="project" value="InterPro"/>
</dbReference>
<dbReference type="GO" id="GO:0045892">
    <property type="term" value="P:negative regulation of DNA-templated transcription"/>
    <property type="evidence" value="ECO:0007669"/>
    <property type="project" value="UniProtKB-UniRule"/>
</dbReference>
<dbReference type="FunFam" id="1.10.10.10:FF:000049">
    <property type="entry name" value="Heat-inducible transcription repressor HrcA"/>
    <property type="match status" value="1"/>
</dbReference>
<dbReference type="Gene3D" id="3.30.450.40">
    <property type="match status" value="1"/>
</dbReference>
<dbReference type="Gene3D" id="3.30.390.60">
    <property type="entry name" value="Heat-inducible transcription repressor hrca homolog, domain 3"/>
    <property type="match status" value="1"/>
</dbReference>
<dbReference type="Gene3D" id="1.10.10.10">
    <property type="entry name" value="Winged helix-like DNA-binding domain superfamily/Winged helix DNA-binding domain"/>
    <property type="match status" value="1"/>
</dbReference>
<dbReference type="HAMAP" id="MF_00081">
    <property type="entry name" value="HrcA"/>
    <property type="match status" value="1"/>
</dbReference>
<dbReference type="InterPro" id="IPR029016">
    <property type="entry name" value="GAF-like_dom_sf"/>
</dbReference>
<dbReference type="InterPro" id="IPR002571">
    <property type="entry name" value="HrcA"/>
</dbReference>
<dbReference type="InterPro" id="IPR021153">
    <property type="entry name" value="HrcA_C"/>
</dbReference>
<dbReference type="InterPro" id="IPR036388">
    <property type="entry name" value="WH-like_DNA-bd_sf"/>
</dbReference>
<dbReference type="InterPro" id="IPR036390">
    <property type="entry name" value="WH_DNA-bd_sf"/>
</dbReference>
<dbReference type="InterPro" id="IPR023120">
    <property type="entry name" value="WHTH_transcript_rep_HrcA_IDD"/>
</dbReference>
<dbReference type="NCBIfam" id="TIGR00331">
    <property type="entry name" value="hrcA"/>
    <property type="match status" value="1"/>
</dbReference>
<dbReference type="PANTHER" id="PTHR34824">
    <property type="entry name" value="HEAT-INDUCIBLE TRANSCRIPTION REPRESSOR HRCA"/>
    <property type="match status" value="1"/>
</dbReference>
<dbReference type="PANTHER" id="PTHR34824:SF1">
    <property type="entry name" value="HEAT-INDUCIBLE TRANSCRIPTION REPRESSOR HRCA"/>
    <property type="match status" value="1"/>
</dbReference>
<dbReference type="Pfam" id="PF01628">
    <property type="entry name" value="HrcA"/>
    <property type="match status" value="1"/>
</dbReference>
<dbReference type="PIRSF" id="PIRSF005485">
    <property type="entry name" value="HrcA"/>
    <property type="match status" value="1"/>
</dbReference>
<dbReference type="SUPFAM" id="SSF55781">
    <property type="entry name" value="GAF domain-like"/>
    <property type="match status" value="1"/>
</dbReference>
<dbReference type="SUPFAM" id="SSF46785">
    <property type="entry name" value="Winged helix' DNA-binding domain"/>
    <property type="match status" value="1"/>
</dbReference>
<sequence>MGSAEDRRFEVLRAIVADFVATKEPIGSKTLVDRHNLGVSSATVRNDMAVLEAEGYITQPHTSSGRVPTEKGYREFVDRLDDVKPMSSAERRAILSFLESGVDLDDVLRRAVRLLAQLTRQVAVVQYPMLSTSTVRRLEVVALTPARLLLIVITDSGRIDQRIVELGDAIDEDELTQLRDLLGQALEGKPLTTASIAVSDLASHLGGQGRLANAVGRSATVLVESLVEHREERLLLGGTANLTRNTADFGGSLRSLLEALEEQVVVLRLLAKQQEAGKVTVRIGHETEAEEMAGASVVTTAYGSAGKVFGGMGVLGPTRMDYPGTIANVAAVALYIGEVLGNR</sequence>
<proteinExistence type="inferred from homology"/>
<keyword id="KW-0678">Repressor</keyword>
<keyword id="KW-0346">Stress response</keyword>
<keyword id="KW-0804">Transcription</keyword>
<keyword id="KW-0805">Transcription regulation</keyword>
<evidence type="ECO:0000255" key="1">
    <source>
        <dbReference type="HAMAP-Rule" id="MF_00081"/>
    </source>
</evidence>
<feature type="chain" id="PRO_1000075289" description="Heat-inducible transcription repressor HrcA">
    <location>
        <begin position="1"/>
        <end position="343"/>
    </location>
</feature>
<accession>A4T2C4</accession>